<reference key="1">
    <citation type="journal article" date="1991" name="Plant Mol. Biol.">
        <title>Stress responses in alfalfa (Medicago sativa L.) 12. Sequence analysis of phenylalanine ammonia-lyase (PAL) cDNA clones and appearance of PAL transcripts in elicitor-treated cell cultures and developing plants.</title>
        <authorList>
            <person name="Gowri G."/>
            <person name="Paiva N.L."/>
            <person name="Dixon R.A."/>
        </authorList>
    </citation>
    <scope>NUCLEOTIDE SEQUENCE [MRNA]</scope>
    <source>
        <strain>cv. Apollo</strain>
    </source>
</reference>
<organism>
    <name type="scientific">Medicago sativa</name>
    <name type="common">Alfalfa</name>
    <dbReference type="NCBI Taxonomy" id="3879"/>
    <lineage>
        <taxon>Eukaryota</taxon>
        <taxon>Viridiplantae</taxon>
        <taxon>Streptophyta</taxon>
        <taxon>Embryophyta</taxon>
        <taxon>Tracheophyta</taxon>
        <taxon>Spermatophyta</taxon>
        <taxon>Magnoliopsida</taxon>
        <taxon>eudicotyledons</taxon>
        <taxon>Gunneridae</taxon>
        <taxon>Pentapetalae</taxon>
        <taxon>rosids</taxon>
        <taxon>fabids</taxon>
        <taxon>Fabales</taxon>
        <taxon>Fabaceae</taxon>
        <taxon>Papilionoideae</taxon>
        <taxon>50 kb inversion clade</taxon>
        <taxon>NPAAA clade</taxon>
        <taxon>Hologalegina</taxon>
        <taxon>IRL clade</taxon>
        <taxon>Trifolieae</taxon>
        <taxon>Medicago</taxon>
    </lineage>
</organism>
<sequence length="725" mass="78866">METISAAITKNNANESFCLIHAKNNNNMKVNEADPLNWGVAAEAMKGSHLDEVKRMVAEYRKPVVRLGGETLTISQVAAIAAHDHGVQVDLSESARDGVKASSEWVMESMNKGTDSYGVTTGFGATSHSRTKQGGALQKELIRFLNAGIFGNGTESNHTLPKTATRAAMLVRINTLLQGYSGIDFEILEAITKPLNKTVTPCLPLRGTITASGDLVPLSYIAGLLTGRPNSKAHGPSGEVLNAKEAFNLAGINAEFFELQPKEGLALVNGTAVGSGLASIVLFEANILAVLSEVLSAIFAEVMQGKPEFTDHLTHKLKHHPGQIEAAAIMEHILDGSSYVKAAKKLHEIDPLQKPKQDRYALRTSPQWLGPLVEVIRFSTKSIEREINSVNDNPLIDVSRNKALHGGNFQGTPIGVSMDNTRLALASIGKLMFAQFSELVNDFYNNGLPSNLSASRNPSLDYGFKGAEIAMASYCSELQYLANPVTTHVQSAEQHNQDVNSLGLISARKTNEAIEILQLMSSTFLIALCQAIDLRHLEENLKNSVKNTVSQVAKKTLTMGVNGELHPSRFCEKDLLKVVDREHVFAYIDDPCSATYPLSQKLRQVLVDHALVNGESEKNFNTSIFQKIATFEEELKTLLPKEVESARTAYESGNPTIPNKINGCRSYPLYKFVREELGTGLLTGENVISPGEECDKLFSAMCQGKIIDPLLECLGEWNGAPLPIC</sequence>
<keyword id="KW-0963">Cytoplasm</keyword>
<keyword id="KW-0456">Lyase</keyword>
<keyword id="KW-0585">Phenylalanine catabolism</keyword>
<keyword id="KW-0587">Phenylpropanoid metabolism</keyword>
<proteinExistence type="evidence at transcript level"/>
<feature type="chain" id="PRO_0000215400" description="Phenylalanine ammonia-lyase">
    <location>
        <begin position="1"/>
        <end position="725"/>
    </location>
</feature>
<feature type="active site" description="Proton donor/acceptor" evidence="3">
    <location>
        <position position="117"/>
    </location>
</feature>
<feature type="binding site" evidence="3">
    <location>
        <position position="269"/>
    </location>
    <ligand>
        <name>(E)-cinnamate</name>
        <dbReference type="ChEBI" id="CHEBI:15669"/>
    </ligand>
</feature>
<feature type="binding site" evidence="3">
    <location>
        <position position="357"/>
    </location>
    <ligand>
        <name>(E)-cinnamate</name>
        <dbReference type="ChEBI" id="CHEBI:15669"/>
    </ligand>
</feature>
<feature type="binding site" evidence="3">
    <location>
        <position position="363"/>
    </location>
    <ligand>
        <name>(E)-cinnamate</name>
        <dbReference type="ChEBI" id="CHEBI:15669"/>
    </ligand>
</feature>
<feature type="binding site" evidence="3">
    <location>
        <position position="393"/>
    </location>
    <ligand>
        <name>(E)-cinnamate</name>
        <dbReference type="ChEBI" id="CHEBI:15669"/>
    </ligand>
</feature>
<feature type="binding site" evidence="1">
    <location>
        <position position="465"/>
    </location>
    <ligand>
        <name>(E)-cinnamate</name>
        <dbReference type="ChEBI" id="CHEBI:15669"/>
    </ligand>
</feature>
<feature type="binding site" evidence="1">
    <location>
        <position position="493"/>
    </location>
    <ligand>
        <name>(E)-cinnamate</name>
        <dbReference type="ChEBI" id="CHEBI:15669"/>
    </ligand>
</feature>
<feature type="binding site" evidence="3">
    <location>
        <position position="496"/>
    </location>
    <ligand>
        <name>(E)-cinnamate</name>
        <dbReference type="ChEBI" id="CHEBI:15669"/>
    </ligand>
</feature>
<feature type="modified residue" description="2,3-didehydroalanine (Ser)" evidence="4">
    <location>
        <position position="212"/>
    </location>
</feature>
<feature type="cross-link" description="5-imidazolinone (Ala-Gly)" evidence="3">
    <location>
        <begin position="211"/>
        <end position="213"/>
    </location>
</feature>
<comment type="function">
    <text evidence="2">This is a key enzyme of plant metabolism catalyzing the first reaction in the biosynthesis from L-phenylalanine of a wide variety of natural products based on the phenylpropane skeleton.</text>
</comment>
<comment type="catalytic activity">
    <reaction evidence="2">
        <text>L-phenylalanine = (E)-cinnamate + NH4(+)</text>
        <dbReference type="Rhea" id="RHEA:21384"/>
        <dbReference type="ChEBI" id="CHEBI:15669"/>
        <dbReference type="ChEBI" id="CHEBI:28938"/>
        <dbReference type="ChEBI" id="CHEBI:58095"/>
        <dbReference type="EC" id="4.3.1.24"/>
    </reaction>
</comment>
<comment type="pathway">
    <text evidence="5">Phenylpropanoid metabolism; trans-cinnamate biosynthesis; trans-cinnamate from L-phenylalanine: step 1/1.</text>
</comment>
<comment type="subunit">
    <text evidence="2">Homotetramer.</text>
</comment>
<comment type="subcellular location">
    <subcellularLocation>
        <location evidence="5">Cytoplasm</location>
    </subcellularLocation>
</comment>
<comment type="PTM">
    <text evidence="3">Contains an active site 4-methylidene-imidazol-5-one (MIO), which is formed autocatalytically by cyclization and dehydration of residues Ala-Ser-Gly.</text>
</comment>
<comment type="similarity">
    <text evidence="5">Belongs to the PAL/histidase family.</text>
</comment>
<accession>P27990</accession>
<protein>
    <recommendedName>
        <fullName>Phenylalanine ammonia-lyase</fullName>
        <ecNumber evidence="2">4.3.1.24</ecNumber>
    </recommendedName>
</protein>
<evidence type="ECO:0000250" key="1">
    <source>
        <dbReference type="UniProtKB" id="P11544"/>
    </source>
</evidence>
<evidence type="ECO:0000250" key="2">
    <source>
        <dbReference type="UniProtKB" id="P24481"/>
    </source>
</evidence>
<evidence type="ECO:0000250" key="3">
    <source>
        <dbReference type="UniProtKB" id="Q68G84"/>
    </source>
</evidence>
<evidence type="ECO:0000255" key="4">
    <source>
        <dbReference type="PROSITE-ProRule" id="PRU10122"/>
    </source>
</evidence>
<evidence type="ECO:0000305" key="5"/>
<name>PALY_MEDSA</name>
<dbReference type="EC" id="4.3.1.24" evidence="2"/>
<dbReference type="EMBL" id="X58180">
    <property type="protein sequence ID" value="CAA41169.1"/>
    <property type="molecule type" value="mRNA"/>
</dbReference>
<dbReference type="PIR" id="S17444">
    <property type="entry name" value="S17444"/>
</dbReference>
<dbReference type="SMR" id="P27990"/>
<dbReference type="UniPathway" id="UPA00713">
    <property type="reaction ID" value="UER00725"/>
</dbReference>
<dbReference type="GO" id="GO:0005737">
    <property type="term" value="C:cytoplasm"/>
    <property type="evidence" value="ECO:0007669"/>
    <property type="project" value="UniProtKB-SubCell"/>
</dbReference>
<dbReference type="GO" id="GO:0045548">
    <property type="term" value="F:phenylalanine ammonia-lyase activity"/>
    <property type="evidence" value="ECO:0007669"/>
    <property type="project" value="UniProtKB-EC"/>
</dbReference>
<dbReference type="GO" id="GO:0009800">
    <property type="term" value="P:cinnamic acid biosynthetic process"/>
    <property type="evidence" value="ECO:0007669"/>
    <property type="project" value="UniProtKB-UniPathway"/>
</dbReference>
<dbReference type="GO" id="GO:0006559">
    <property type="term" value="P:L-phenylalanine catabolic process"/>
    <property type="evidence" value="ECO:0007669"/>
    <property type="project" value="UniProtKB-KW"/>
</dbReference>
<dbReference type="CDD" id="cd00332">
    <property type="entry name" value="PAL-HAL"/>
    <property type="match status" value="1"/>
</dbReference>
<dbReference type="FunFam" id="1.10.274.20:FF:000001">
    <property type="entry name" value="Phenylalanine ammonia-lyase"/>
    <property type="match status" value="1"/>
</dbReference>
<dbReference type="FunFam" id="1.10.275.10:FF:000009">
    <property type="entry name" value="Phenylalanine ammonia-lyase"/>
    <property type="match status" value="1"/>
</dbReference>
<dbReference type="FunFam" id="1.20.200.10:FF:000009">
    <property type="entry name" value="Phenylalanine ammonia-lyase"/>
    <property type="match status" value="1"/>
</dbReference>
<dbReference type="Gene3D" id="1.20.200.10">
    <property type="entry name" value="Fumarase/aspartase (Central domain)"/>
    <property type="match status" value="1"/>
</dbReference>
<dbReference type="Gene3D" id="1.10.275.10">
    <property type="entry name" value="Fumarase/aspartase (N-terminal domain)"/>
    <property type="match status" value="1"/>
</dbReference>
<dbReference type="Gene3D" id="1.10.274.20">
    <property type="entry name" value="Phenylalanine ammonia-lyase 1, domain 3"/>
    <property type="match status" value="1"/>
</dbReference>
<dbReference type="InterPro" id="IPR001106">
    <property type="entry name" value="Aromatic_Lyase"/>
</dbReference>
<dbReference type="InterPro" id="IPR024083">
    <property type="entry name" value="Fumarase/histidase_N"/>
</dbReference>
<dbReference type="InterPro" id="IPR008948">
    <property type="entry name" value="L-Aspartase-like"/>
</dbReference>
<dbReference type="InterPro" id="IPR022313">
    <property type="entry name" value="Phe/His_NH3-lyase_AS"/>
</dbReference>
<dbReference type="InterPro" id="IPR005922">
    <property type="entry name" value="Phe_NH3-lyase"/>
</dbReference>
<dbReference type="InterPro" id="IPR023144">
    <property type="entry name" value="Phe_NH3-lyase_shielding_dom_sf"/>
</dbReference>
<dbReference type="NCBIfam" id="TIGR01226">
    <property type="entry name" value="phe_am_lyase"/>
    <property type="match status" value="1"/>
</dbReference>
<dbReference type="PANTHER" id="PTHR10362">
    <property type="entry name" value="HISTIDINE AMMONIA-LYASE"/>
    <property type="match status" value="1"/>
</dbReference>
<dbReference type="Pfam" id="PF00221">
    <property type="entry name" value="Lyase_aromatic"/>
    <property type="match status" value="1"/>
</dbReference>
<dbReference type="SUPFAM" id="SSF48557">
    <property type="entry name" value="L-aspartase-like"/>
    <property type="match status" value="1"/>
</dbReference>
<dbReference type="PROSITE" id="PS00488">
    <property type="entry name" value="PAL_HISTIDASE"/>
    <property type="match status" value="1"/>
</dbReference>